<sequence length="306" mass="33341">MALCALTSALRSLSLASAAITARVPTLLPAAQIQSNVLLQLPPALVSPSYRPVHMSADRSAKFVSWKSRTKYTVKPVKMRKSGGRDHTGRIRVHGIGGGHKQNYRMIDFLRFRPEKEKAPEPFEEKVVVVRYDPCRSADIALVAGGSRKRWIIATENMKAGDTILNSNHIGRMAVAAQEGDAHPLGALPVGTLINNVESEPGRGAQYIRAAGTCGVLLRKVNGTAIIQLPSKRQMQVLESCTATVGRVSNVNHNQRVIGKAGRNRWLGKRPNSGLWQRKGGWAGRKIRPLPPMKSYVKLPSAAAQN</sequence>
<gene>
    <name type="primary">Mrpl2</name>
</gene>
<protein>
    <recommendedName>
        <fullName evidence="3">Large ribosomal subunit protein uL2m</fullName>
    </recommendedName>
    <alternativeName>
        <fullName>39S ribosomal protein L2, mitochondrial</fullName>
        <shortName>L2mt</shortName>
        <shortName>MRP-L2</shortName>
    </alternativeName>
</protein>
<evidence type="ECO:0000250" key="1">
    <source>
        <dbReference type="UniProtKB" id="Q5T653"/>
    </source>
</evidence>
<evidence type="ECO:0000255" key="2"/>
<evidence type="ECO:0000305" key="3"/>
<name>RM02_MOUSE</name>
<proteinExistence type="evidence at protein level"/>
<comment type="subunit">
    <text evidence="1">Component of the mitochondrial ribosome large subunit (39S) which comprises a 16S rRNA and about 50 distinct proteins.</text>
</comment>
<comment type="subcellular location">
    <subcellularLocation>
        <location evidence="1">Mitochondrion</location>
    </subcellularLocation>
</comment>
<comment type="similarity">
    <text evidence="3">Belongs to the universal ribosomal protein uL2 family.</text>
</comment>
<feature type="transit peptide" description="Mitochondrion" evidence="2">
    <location>
        <begin position="1"/>
        <end position="60"/>
    </location>
</feature>
<feature type="chain" id="PRO_0000261641" description="Large ribosomal subunit protein uL2m">
    <location>
        <begin position="61"/>
        <end position="306"/>
    </location>
</feature>
<keyword id="KW-0496">Mitochondrion</keyword>
<keyword id="KW-1185">Reference proteome</keyword>
<keyword id="KW-0687">Ribonucleoprotein</keyword>
<keyword id="KW-0689">Ribosomal protein</keyword>
<keyword id="KW-0809">Transit peptide</keyword>
<accession>Q9D773</accession>
<organism>
    <name type="scientific">Mus musculus</name>
    <name type="common">Mouse</name>
    <dbReference type="NCBI Taxonomy" id="10090"/>
    <lineage>
        <taxon>Eukaryota</taxon>
        <taxon>Metazoa</taxon>
        <taxon>Chordata</taxon>
        <taxon>Craniata</taxon>
        <taxon>Vertebrata</taxon>
        <taxon>Euteleostomi</taxon>
        <taxon>Mammalia</taxon>
        <taxon>Eutheria</taxon>
        <taxon>Euarchontoglires</taxon>
        <taxon>Glires</taxon>
        <taxon>Rodentia</taxon>
        <taxon>Myomorpha</taxon>
        <taxon>Muroidea</taxon>
        <taxon>Muridae</taxon>
        <taxon>Murinae</taxon>
        <taxon>Mus</taxon>
        <taxon>Mus</taxon>
    </lineage>
</organism>
<reference key="1">
    <citation type="journal article" date="2005" name="Science">
        <title>The transcriptional landscape of the mammalian genome.</title>
        <authorList>
            <person name="Carninci P."/>
            <person name="Kasukawa T."/>
            <person name="Katayama S."/>
            <person name="Gough J."/>
            <person name="Frith M.C."/>
            <person name="Maeda N."/>
            <person name="Oyama R."/>
            <person name="Ravasi T."/>
            <person name="Lenhard B."/>
            <person name="Wells C."/>
            <person name="Kodzius R."/>
            <person name="Shimokawa K."/>
            <person name="Bajic V.B."/>
            <person name="Brenner S.E."/>
            <person name="Batalov S."/>
            <person name="Forrest A.R."/>
            <person name="Zavolan M."/>
            <person name="Davis M.J."/>
            <person name="Wilming L.G."/>
            <person name="Aidinis V."/>
            <person name="Allen J.E."/>
            <person name="Ambesi-Impiombato A."/>
            <person name="Apweiler R."/>
            <person name="Aturaliya R.N."/>
            <person name="Bailey T.L."/>
            <person name="Bansal M."/>
            <person name="Baxter L."/>
            <person name="Beisel K.W."/>
            <person name="Bersano T."/>
            <person name="Bono H."/>
            <person name="Chalk A.M."/>
            <person name="Chiu K.P."/>
            <person name="Choudhary V."/>
            <person name="Christoffels A."/>
            <person name="Clutterbuck D.R."/>
            <person name="Crowe M.L."/>
            <person name="Dalla E."/>
            <person name="Dalrymple B.P."/>
            <person name="de Bono B."/>
            <person name="Della Gatta G."/>
            <person name="di Bernardo D."/>
            <person name="Down T."/>
            <person name="Engstrom P."/>
            <person name="Fagiolini M."/>
            <person name="Faulkner G."/>
            <person name="Fletcher C.F."/>
            <person name="Fukushima T."/>
            <person name="Furuno M."/>
            <person name="Futaki S."/>
            <person name="Gariboldi M."/>
            <person name="Georgii-Hemming P."/>
            <person name="Gingeras T.R."/>
            <person name="Gojobori T."/>
            <person name="Green R.E."/>
            <person name="Gustincich S."/>
            <person name="Harbers M."/>
            <person name="Hayashi Y."/>
            <person name="Hensch T.K."/>
            <person name="Hirokawa N."/>
            <person name="Hill D."/>
            <person name="Huminiecki L."/>
            <person name="Iacono M."/>
            <person name="Ikeo K."/>
            <person name="Iwama A."/>
            <person name="Ishikawa T."/>
            <person name="Jakt M."/>
            <person name="Kanapin A."/>
            <person name="Katoh M."/>
            <person name="Kawasawa Y."/>
            <person name="Kelso J."/>
            <person name="Kitamura H."/>
            <person name="Kitano H."/>
            <person name="Kollias G."/>
            <person name="Krishnan S.P."/>
            <person name="Kruger A."/>
            <person name="Kummerfeld S.K."/>
            <person name="Kurochkin I.V."/>
            <person name="Lareau L.F."/>
            <person name="Lazarevic D."/>
            <person name="Lipovich L."/>
            <person name="Liu J."/>
            <person name="Liuni S."/>
            <person name="McWilliam S."/>
            <person name="Madan Babu M."/>
            <person name="Madera M."/>
            <person name="Marchionni L."/>
            <person name="Matsuda H."/>
            <person name="Matsuzawa S."/>
            <person name="Miki H."/>
            <person name="Mignone F."/>
            <person name="Miyake S."/>
            <person name="Morris K."/>
            <person name="Mottagui-Tabar S."/>
            <person name="Mulder N."/>
            <person name="Nakano N."/>
            <person name="Nakauchi H."/>
            <person name="Ng P."/>
            <person name="Nilsson R."/>
            <person name="Nishiguchi S."/>
            <person name="Nishikawa S."/>
            <person name="Nori F."/>
            <person name="Ohara O."/>
            <person name="Okazaki Y."/>
            <person name="Orlando V."/>
            <person name="Pang K.C."/>
            <person name="Pavan W.J."/>
            <person name="Pavesi G."/>
            <person name="Pesole G."/>
            <person name="Petrovsky N."/>
            <person name="Piazza S."/>
            <person name="Reed J."/>
            <person name="Reid J.F."/>
            <person name="Ring B.Z."/>
            <person name="Ringwald M."/>
            <person name="Rost B."/>
            <person name="Ruan Y."/>
            <person name="Salzberg S.L."/>
            <person name="Sandelin A."/>
            <person name="Schneider C."/>
            <person name="Schoenbach C."/>
            <person name="Sekiguchi K."/>
            <person name="Semple C.A."/>
            <person name="Seno S."/>
            <person name="Sessa L."/>
            <person name="Sheng Y."/>
            <person name="Shibata Y."/>
            <person name="Shimada H."/>
            <person name="Shimada K."/>
            <person name="Silva D."/>
            <person name="Sinclair B."/>
            <person name="Sperling S."/>
            <person name="Stupka E."/>
            <person name="Sugiura K."/>
            <person name="Sultana R."/>
            <person name="Takenaka Y."/>
            <person name="Taki K."/>
            <person name="Tammoja K."/>
            <person name="Tan S.L."/>
            <person name="Tang S."/>
            <person name="Taylor M.S."/>
            <person name="Tegner J."/>
            <person name="Teichmann S.A."/>
            <person name="Ueda H.R."/>
            <person name="van Nimwegen E."/>
            <person name="Verardo R."/>
            <person name="Wei C.L."/>
            <person name="Yagi K."/>
            <person name="Yamanishi H."/>
            <person name="Zabarovsky E."/>
            <person name="Zhu S."/>
            <person name="Zimmer A."/>
            <person name="Hide W."/>
            <person name="Bult C."/>
            <person name="Grimmond S.M."/>
            <person name="Teasdale R.D."/>
            <person name="Liu E.T."/>
            <person name="Brusic V."/>
            <person name="Quackenbush J."/>
            <person name="Wahlestedt C."/>
            <person name="Mattick J.S."/>
            <person name="Hume D.A."/>
            <person name="Kai C."/>
            <person name="Sasaki D."/>
            <person name="Tomaru Y."/>
            <person name="Fukuda S."/>
            <person name="Kanamori-Katayama M."/>
            <person name="Suzuki M."/>
            <person name="Aoki J."/>
            <person name="Arakawa T."/>
            <person name="Iida J."/>
            <person name="Imamura K."/>
            <person name="Itoh M."/>
            <person name="Kato T."/>
            <person name="Kawaji H."/>
            <person name="Kawagashira N."/>
            <person name="Kawashima T."/>
            <person name="Kojima M."/>
            <person name="Kondo S."/>
            <person name="Konno H."/>
            <person name="Nakano K."/>
            <person name="Ninomiya N."/>
            <person name="Nishio T."/>
            <person name="Okada M."/>
            <person name="Plessy C."/>
            <person name="Shibata K."/>
            <person name="Shiraki T."/>
            <person name="Suzuki S."/>
            <person name="Tagami M."/>
            <person name="Waki K."/>
            <person name="Watahiki A."/>
            <person name="Okamura-Oho Y."/>
            <person name="Suzuki H."/>
            <person name="Kawai J."/>
            <person name="Hayashizaki Y."/>
        </authorList>
    </citation>
    <scope>NUCLEOTIDE SEQUENCE [LARGE SCALE MRNA]</scope>
    <source>
        <strain>C57BL/6J</strain>
        <tissue>Tongue</tissue>
    </source>
</reference>
<reference key="2">
    <citation type="journal article" date="2004" name="Genome Res.">
        <title>The status, quality, and expansion of the NIH full-length cDNA project: the Mammalian Gene Collection (MGC).</title>
        <authorList>
            <consortium name="The MGC Project Team"/>
        </authorList>
    </citation>
    <scope>NUCLEOTIDE SEQUENCE [LARGE SCALE MRNA]</scope>
    <source>
        <strain>FVB/N</strain>
        <tissue>Mammary tumor</tissue>
    </source>
</reference>
<reference key="3">
    <citation type="journal article" date="2010" name="Cell">
        <title>A tissue-specific atlas of mouse protein phosphorylation and expression.</title>
        <authorList>
            <person name="Huttlin E.L."/>
            <person name="Jedrychowski M.P."/>
            <person name="Elias J.E."/>
            <person name="Goswami T."/>
            <person name="Rad R."/>
            <person name="Beausoleil S.A."/>
            <person name="Villen J."/>
            <person name="Haas W."/>
            <person name="Sowa M.E."/>
            <person name="Gygi S.P."/>
        </authorList>
    </citation>
    <scope>IDENTIFICATION BY MASS SPECTROMETRY [LARGE SCALE ANALYSIS]</scope>
    <source>
        <tissue>Brain</tissue>
        <tissue>Brown adipose tissue</tissue>
        <tissue>Heart</tissue>
        <tissue>Kidney</tissue>
        <tissue>Liver</tissue>
        <tissue>Lung</tissue>
        <tissue>Spleen</tissue>
    </source>
</reference>
<dbReference type="EMBL" id="AK009521">
    <property type="protein sequence ID" value="BAB26336.1"/>
    <property type="molecule type" value="mRNA"/>
</dbReference>
<dbReference type="EMBL" id="BC027762">
    <property type="protein sequence ID" value="AAH27762.1"/>
    <property type="molecule type" value="mRNA"/>
</dbReference>
<dbReference type="CCDS" id="CCDS37638.1"/>
<dbReference type="RefSeq" id="NP_001303671.1">
    <property type="nucleotide sequence ID" value="NM_001316742.1"/>
</dbReference>
<dbReference type="RefSeq" id="NP_079578.1">
    <property type="nucleotide sequence ID" value="NM_025302.4"/>
</dbReference>
<dbReference type="SMR" id="Q9D773"/>
<dbReference type="BioGRID" id="205205">
    <property type="interactions" value="26"/>
</dbReference>
<dbReference type="ComplexPortal" id="CPX-5302">
    <property type="entry name" value="39S mitochondrial large ribosomal subunit"/>
</dbReference>
<dbReference type="FunCoup" id="Q9D773">
    <property type="interactions" value="1540"/>
</dbReference>
<dbReference type="STRING" id="10090.ENSMUSP00000002844"/>
<dbReference type="iPTMnet" id="Q9D773"/>
<dbReference type="PhosphoSitePlus" id="Q9D773"/>
<dbReference type="PaxDb" id="10090-ENSMUSP00000002844"/>
<dbReference type="ProteomicsDB" id="300397"/>
<dbReference type="Pumba" id="Q9D773"/>
<dbReference type="Antibodypedia" id="2348">
    <property type="antibodies" value="143 antibodies from 22 providers"/>
</dbReference>
<dbReference type="DNASU" id="27398"/>
<dbReference type="Ensembl" id="ENSMUST00000002844.14">
    <property type="protein sequence ID" value="ENSMUSP00000002844.8"/>
    <property type="gene ID" value="ENSMUSG00000002767.14"/>
</dbReference>
<dbReference type="GeneID" id="27398"/>
<dbReference type="KEGG" id="mmu:27398"/>
<dbReference type="UCSC" id="uc008ctm.1">
    <property type="organism name" value="mouse"/>
</dbReference>
<dbReference type="AGR" id="MGI:1351622"/>
<dbReference type="CTD" id="51069"/>
<dbReference type="MGI" id="MGI:1351622">
    <property type="gene designation" value="Mrpl2"/>
</dbReference>
<dbReference type="VEuPathDB" id="HostDB:ENSMUSG00000002767"/>
<dbReference type="eggNOG" id="KOG0438">
    <property type="taxonomic scope" value="Eukaryota"/>
</dbReference>
<dbReference type="GeneTree" id="ENSGT00940000153244"/>
<dbReference type="InParanoid" id="Q9D773"/>
<dbReference type="OMA" id="EHNKEHV"/>
<dbReference type="OrthoDB" id="268576at2759"/>
<dbReference type="PhylomeDB" id="Q9D773"/>
<dbReference type="TreeFam" id="TF314647"/>
<dbReference type="Reactome" id="R-MMU-5389840">
    <property type="pathway name" value="Mitochondrial translation elongation"/>
</dbReference>
<dbReference type="Reactome" id="R-MMU-5419276">
    <property type="pathway name" value="Mitochondrial translation termination"/>
</dbReference>
<dbReference type="BioGRID-ORCS" id="27398">
    <property type="hits" value="19 hits in 112 CRISPR screens"/>
</dbReference>
<dbReference type="ChiTaRS" id="Mrpl2">
    <property type="organism name" value="mouse"/>
</dbReference>
<dbReference type="PRO" id="PR:Q9D773"/>
<dbReference type="Proteomes" id="UP000000589">
    <property type="component" value="Chromosome 17"/>
</dbReference>
<dbReference type="RNAct" id="Q9D773">
    <property type="molecule type" value="protein"/>
</dbReference>
<dbReference type="Bgee" id="ENSMUSG00000002767">
    <property type="expression patterns" value="Expressed in endothelial cell of lymphatic vessel and 257 other cell types or tissues"/>
</dbReference>
<dbReference type="ExpressionAtlas" id="Q9D773">
    <property type="expression patterns" value="baseline and differential"/>
</dbReference>
<dbReference type="GO" id="GO:0005743">
    <property type="term" value="C:mitochondrial inner membrane"/>
    <property type="evidence" value="ECO:0000303"/>
    <property type="project" value="ComplexPortal"/>
</dbReference>
<dbReference type="GO" id="GO:0005762">
    <property type="term" value="C:mitochondrial large ribosomal subunit"/>
    <property type="evidence" value="ECO:0000250"/>
    <property type="project" value="UniProtKB"/>
</dbReference>
<dbReference type="GO" id="GO:0005739">
    <property type="term" value="C:mitochondrion"/>
    <property type="evidence" value="ECO:0007005"/>
    <property type="project" value="MGI"/>
</dbReference>
<dbReference type="GO" id="GO:0005654">
    <property type="term" value="C:nucleoplasm"/>
    <property type="evidence" value="ECO:0007669"/>
    <property type="project" value="Ensembl"/>
</dbReference>
<dbReference type="GO" id="GO:0003735">
    <property type="term" value="F:structural constituent of ribosome"/>
    <property type="evidence" value="ECO:0000247"/>
    <property type="project" value="MGI"/>
</dbReference>
<dbReference type="GO" id="GO:0032543">
    <property type="term" value="P:mitochondrial translation"/>
    <property type="evidence" value="ECO:0000303"/>
    <property type="project" value="ComplexPortal"/>
</dbReference>
<dbReference type="GO" id="GO:0006412">
    <property type="term" value="P:translation"/>
    <property type="evidence" value="ECO:0000247"/>
    <property type="project" value="MGI"/>
</dbReference>
<dbReference type="FunFam" id="2.30.30.30:FF:000025">
    <property type="entry name" value="39S ribosomal protein L2, mitochondrial"/>
    <property type="match status" value="1"/>
</dbReference>
<dbReference type="FunFam" id="2.40.50.140:FF:000157">
    <property type="entry name" value="39S ribosomal protein L2, mitochondrial"/>
    <property type="match status" value="1"/>
</dbReference>
<dbReference type="Gene3D" id="2.30.30.30">
    <property type="match status" value="1"/>
</dbReference>
<dbReference type="Gene3D" id="2.40.50.140">
    <property type="entry name" value="Nucleic acid-binding proteins"/>
    <property type="match status" value="1"/>
</dbReference>
<dbReference type="InterPro" id="IPR012340">
    <property type="entry name" value="NA-bd_OB-fold"/>
</dbReference>
<dbReference type="InterPro" id="IPR014722">
    <property type="entry name" value="Rib_uL2_dom2"/>
</dbReference>
<dbReference type="InterPro" id="IPR002171">
    <property type="entry name" value="Ribosomal_uL2"/>
</dbReference>
<dbReference type="InterPro" id="IPR022669">
    <property type="entry name" value="Ribosomal_uL2_C"/>
</dbReference>
<dbReference type="InterPro" id="IPR022666">
    <property type="entry name" value="Ribosomal_uL2_RNA-bd_dom"/>
</dbReference>
<dbReference type="InterPro" id="IPR008991">
    <property type="entry name" value="Translation_prot_SH3-like_sf"/>
</dbReference>
<dbReference type="PANTHER" id="PTHR13691:SF73">
    <property type="entry name" value="LARGE RIBOSOMAL SUBUNIT PROTEIN UL2M"/>
    <property type="match status" value="1"/>
</dbReference>
<dbReference type="PANTHER" id="PTHR13691">
    <property type="entry name" value="RIBOSOMAL PROTEIN L2"/>
    <property type="match status" value="1"/>
</dbReference>
<dbReference type="Pfam" id="PF00181">
    <property type="entry name" value="Ribosomal_L2"/>
    <property type="match status" value="1"/>
</dbReference>
<dbReference type="Pfam" id="PF03947">
    <property type="entry name" value="Ribosomal_L2_C"/>
    <property type="match status" value="1"/>
</dbReference>
<dbReference type="SMART" id="SM01383">
    <property type="entry name" value="Ribosomal_L2"/>
    <property type="match status" value="1"/>
</dbReference>
<dbReference type="SMART" id="SM01382">
    <property type="entry name" value="Ribosomal_L2_C"/>
    <property type="match status" value="1"/>
</dbReference>
<dbReference type="SUPFAM" id="SSF50249">
    <property type="entry name" value="Nucleic acid-binding proteins"/>
    <property type="match status" value="1"/>
</dbReference>
<dbReference type="SUPFAM" id="SSF50104">
    <property type="entry name" value="Translation proteins SH3-like domain"/>
    <property type="match status" value="1"/>
</dbReference>